<accession>Q8THU2</accession>
<comment type="function">
    <text evidence="1">Exchanges the guanine residue with 7-cyano-7-deazaguanine (preQ0) at position 15 in the dihydrouridine loop (D-loop) of archaeal tRNAs.</text>
</comment>
<comment type="catalytic activity">
    <reaction evidence="1">
        <text>guanosine(15) in tRNA + 7-cyano-7-deazaguanine = 7-cyano-7-carbaguanosine(15) in tRNA + guanine</text>
        <dbReference type="Rhea" id="RHEA:43164"/>
        <dbReference type="Rhea" id="RHEA-COMP:10371"/>
        <dbReference type="Rhea" id="RHEA-COMP:10372"/>
        <dbReference type="ChEBI" id="CHEBI:16235"/>
        <dbReference type="ChEBI" id="CHEBI:45075"/>
        <dbReference type="ChEBI" id="CHEBI:74269"/>
        <dbReference type="ChEBI" id="CHEBI:82850"/>
        <dbReference type="EC" id="2.4.2.48"/>
    </reaction>
</comment>
<comment type="cofactor">
    <cofactor evidence="1">
        <name>Zn(2+)</name>
        <dbReference type="ChEBI" id="CHEBI:29105"/>
    </cofactor>
    <text evidence="1">Binds 1 zinc ion per subunit.</text>
</comment>
<comment type="pathway">
    <text evidence="1">tRNA modification; archaeosine-tRNA biosynthesis.</text>
</comment>
<comment type="similarity">
    <text evidence="1">Belongs to the archaeosine tRNA-ribosyltransferase family.</text>
</comment>
<sequence>MSAIFEILDKDAGGRIGKLRTPHGIVETPTVMPVINPNIQLISPKEMKSFGAEILITNSYIIYRKEELRTVALEKGLHGLLGFDGPIMTDSGSFQLSVYGSVEVTNEEILGFQQKIGSDIIVPLDIPTPPDVHFRRAEEELAVTAERLEAARKFIQGEQLLAGPVQGSTYPELREKAASRLRDLNFEVYPLGAVVPLMEAYRYAELVDVIAASKKGLSPTSPVHLFGAGHPMMFALAVSLGCDLFDSAAYALYAKDGRYITANGTYHLEKLNYLPCSCPVCSKYTADELRKAKNKEELLGKHNLYATFAEIRLIKQSIKDGKLLELVEQRCRAHPKLLDGLKRLYTHSAWLEQFDPATKGTYFYCGPESSFRPEVLRFEKRLDRFSLEGSAIIRTAPVKGEKDYDRVLTFKAPFGSFPAEMEEVYPFNAEVPKFPDYETLSTALSNTLKLMELNPGAEFTFICEKEFEHPLIEEIGKKAKLVYRAAWKKE</sequence>
<proteinExistence type="inferred from homology"/>
<protein>
    <recommendedName>
        <fullName evidence="1">tRNA-guanine(15) transglycosylase</fullName>
        <ecNumber evidence="1">2.4.2.48</ecNumber>
    </recommendedName>
    <alternativeName>
        <fullName evidence="1">7-cyano-7-deazaguanine tRNA-ribosyltransferase</fullName>
    </alternativeName>
    <alternativeName>
        <fullName evidence="1">Archaeal tRNA-guanine transglycosylase</fullName>
    </alternativeName>
</protein>
<name>ATGT_METAC</name>
<reference key="1">
    <citation type="journal article" date="2002" name="Genome Res.">
        <title>The genome of Methanosarcina acetivorans reveals extensive metabolic and physiological diversity.</title>
        <authorList>
            <person name="Galagan J.E."/>
            <person name="Nusbaum C."/>
            <person name="Roy A."/>
            <person name="Endrizzi M.G."/>
            <person name="Macdonald P."/>
            <person name="FitzHugh W."/>
            <person name="Calvo S."/>
            <person name="Engels R."/>
            <person name="Smirnov S."/>
            <person name="Atnoor D."/>
            <person name="Brown A."/>
            <person name="Allen N."/>
            <person name="Naylor J."/>
            <person name="Stange-Thomann N."/>
            <person name="DeArellano K."/>
            <person name="Johnson R."/>
            <person name="Linton L."/>
            <person name="McEwan P."/>
            <person name="McKernan K."/>
            <person name="Talamas J."/>
            <person name="Tirrell A."/>
            <person name="Ye W."/>
            <person name="Zimmer A."/>
            <person name="Barber R.D."/>
            <person name="Cann I."/>
            <person name="Graham D.E."/>
            <person name="Grahame D.A."/>
            <person name="Guss A.M."/>
            <person name="Hedderich R."/>
            <person name="Ingram-Smith C."/>
            <person name="Kuettner H.C."/>
            <person name="Krzycki J.A."/>
            <person name="Leigh J.A."/>
            <person name="Li W."/>
            <person name="Liu J."/>
            <person name="Mukhopadhyay B."/>
            <person name="Reeve J.N."/>
            <person name="Smith K."/>
            <person name="Springer T.A."/>
            <person name="Umayam L.A."/>
            <person name="White O."/>
            <person name="White R.H."/>
            <person name="de Macario E.C."/>
            <person name="Ferry J.G."/>
            <person name="Jarrell K.F."/>
            <person name="Jing H."/>
            <person name="Macario A.J.L."/>
            <person name="Paulsen I.T."/>
            <person name="Pritchett M."/>
            <person name="Sowers K.R."/>
            <person name="Swanson R.V."/>
            <person name="Zinder S.H."/>
            <person name="Lander E."/>
            <person name="Metcalf W.W."/>
            <person name="Birren B."/>
        </authorList>
    </citation>
    <scope>NUCLEOTIDE SEQUENCE [LARGE SCALE GENOMIC DNA]</scope>
    <source>
        <strain>ATCC 35395 / DSM 2834 / JCM 12185 / C2A</strain>
    </source>
</reference>
<gene>
    <name evidence="1" type="primary">tgtA</name>
    <name type="ordered locus">MA_4419</name>
</gene>
<keyword id="KW-0328">Glycosyltransferase</keyword>
<keyword id="KW-0479">Metal-binding</keyword>
<keyword id="KW-1185">Reference proteome</keyword>
<keyword id="KW-0808">Transferase</keyword>
<keyword id="KW-0819">tRNA processing</keyword>
<keyword id="KW-0862">Zinc</keyword>
<dbReference type="EC" id="2.4.2.48" evidence="1"/>
<dbReference type="EMBL" id="AE010299">
    <property type="protein sequence ID" value="AAM07761.1"/>
    <property type="molecule type" value="Genomic_DNA"/>
</dbReference>
<dbReference type="RefSeq" id="WP_011024298.1">
    <property type="nucleotide sequence ID" value="NC_003552.1"/>
</dbReference>
<dbReference type="SMR" id="Q8THU2"/>
<dbReference type="FunCoup" id="Q8THU2">
    <property type="interactions" value="23"/>
</dbReference>
<dbReference type="STRING" id="188937.MA_4419"/>
<dbReference type="EnsemblBacteria" id="AAM07761">
    <property type="protein sequence ID" value="AAM07761"/>
    <property type="gene ID" value="MA_4419"/>
</dbReference>
<dbReference type="GeneID" id="1476313"/>
<dbReference type="KEGG" id="mac:MA_4419"/>
<dbReference type="HOGENOM" id="CLU_030083_0_0_2"/>
<dbReference type="InParanoid" id="Q8THU2"/>
<dbReference type="OrthoDB" id="6871at2157"/>
<dbReference type="PhylomeDB" id="Q8THU2"/>
<dbReference type="BRENDA" id="2.4.2.29">
    <property type="organism ID" value="7224"/>
</dbReference>
<dbReference type="BRENDA" id="2.4.2.48">
    <property type="organism ID" value="7224"/>
</dbReference>
<dbReference type="UniPathway" id="UPA00393"/>
<dbReference type="Proteomes" id="UP000002487">
    <property type="component" value="Chromosome"/>
</dbReference>
<dbReference type="GO" id="GO:0005737">
    <property type="term" value="C:cytoplasm"/>
    <property type="evidence" value="ECO:0000318"/>
    <property type="project" value="GO_Central"/>
</dbReference>
<dbReference type="GO" id="GO:0016763">
    <property type="term" value="F:pentosyltransferase activity"/>
    <property type="evidence" value="ECO:0007669"/>
    <property type="project" value="UniProtKB-UniRule"/>
</dbReference>
<dbReference type="GO" id="GO:0008270">
    <property type="term" value="F:zinc ion binding"/>
    <property type="evidence" value="ECO:0007669"/>
    <property type="project" value="UniProtKB-UniRule"/>
</dbReference>
<dbReference type="GO" id="GO:0002099">
    <property type="term" value="P:tRNA wobble guanine modification"/>
    <property type="evidence" value="ECO:0000318"/>
    <property type="project" value="GO_Central"/>
</dbReference>
<dbReference type="Gene3D" id="3.20.20.105">
    <property type="entry name" value="Queuine tRNA-ribosyltransferase-like"/>
    <property type="match status" value="1"/>
</dbReference>
<dbReference type="HAMAP" id="MF_01634">
    <property type="entry name" value="TgtA_arch"/>
    <property type="match status" value="1"/>
</dbReference>
<dbReference type="InterPro" id="IPR050076">
    <property type="entry name" value="ArchSynthase1/Queuine_TRR"/>
</dbReference>
<dbReference type="InterPro" id="IPR036511">
    <property type="entry name" value="TGT-like_sf"/>
</dbReference>
<dbReference type="InterPro" id="IPR004804">
    <property type="entry name" value="TgtA"/>
</dbReference>
<dbReference type="InterPro" id="IPR002616">
    <property type="entry name" value="tRNA_ribo_trans-like"/>
</dbReference>
<dbReference type="NCBIfam" id="TIGR00432">
    <property type="entry name" value="arcsn_tRNA_tgt"/>
    <property type="match status" value="1"/>
</dbReference>
<dbReference type="NCBIfam" id="TIGR00449">
    <property type="entry name" value="tgt_general"/>
    <property type="match status" value="1"/>
</dbReference>
<dbReference type="PANTHER" id="PTHR46499">
    <property type="entry name" value="QUEUINE TRNA-RIBOSYLTRANSFERASE"/>
    <property type="match status" value="1"/>
</dbReference>
<dbReference type="PANTHER" id="PTHR46499:SF1">
    <property type="entry name" value="QUEUINE TRNA-RIBOSYLTRANSFERASE"/>
    <property type="match status" value="1"/>
</dbReference>
<dbReference type="Pfam" id="PF01702">
    <property type="entry name" value="TGT"/>
    <property type="match status" value="1"/>
</dbReference>
<dbReference type="SUPFAM" id="SSF88802">
    <property type="entry name" value="Pre-PUA domain"/>
    <property type="match status" value="1"/>
</dbReference>
<dbReference type="SUPFAM" id="SSF51713">
    <property type="entry name" value="tRNA-guanine transglycosylase"/>
    <property type="match status" value="1"/>
</dbReference>
<evidence type="ECO:0000255" key="1">
    <source>
        <dbReference type="HAMAP-Rule" id="MF_01634"/>
    </source>
</evidence>
<organism>
    <name type="scientific">Methanosarcina acetivorans (strain ATCC 35395 / DSM 2834 / JCM 12185 / C2A)</name>
    <dbReference type="NCBI Taxonomy" id="188937"/>
    <lineage>
        <taxon>Archaea</taxon>
        <taxon>Methanobacteriati</taxon>
        <taxon>Methanobacteriota</taxon>
        <taxon>Stenosarchaea group</taxon>
        <taxon>Methanomicrobia</taxon>
        <taxon>Methanosarcinales</taxon>
        <taxon>Methanosarcinaceae</taxon>
        <taxon>Methanosarcina</taxon>
    </lineage>
</organism>
<feature type="chain" id="PRO_0000247873" description="tRNA-guanine(15) transglycosylase">
    <location>
        <begin position="1"/>
        <end position="490"/>
    </location>
</feature>
<feature type="active site" description="Nucleophile" evidence="1">
    <location>
        <position position="90"/>
    </location>
</feature>
<feature type="binding site" evidence="1">
    <location>
        <position position="125"/>
    </location>
    <ligand>
        <name>substrate</name>
    </ligand>
</feature>
<feature type="binding site" evidence="1">
    <location>
        <position position="193"/>
    </location>
    <ligand>
        <name>substrate</name>
    </ligand>
</feature>
<feature type="binding site" evidence="1">
    <location>
        <position position="276"/>
    </location>
    <ligand>
        <name>Zn(2+)</name>
        <dbReference type="ChEBI" id="CHEBI:29105"/>
    </ligand>
</feature>
<feature type="binding site" evidence="1">
    <location>
        <position position="278"/>
    </location>
    <ligand>
        <name>Zn(2+)</name>
        <dbReference type="ChEBI" id="CHEBI:29105"/>
    </ligand>
</feature>
<feature type="binding site" evidence="1">
    <location>
        <position position="281"/>
    </location>
    <ligand>
        <name>Zn(2+)</name>
        <dbReference type="ChEBI" id="CHEBI:29105"/>
    </ligand>
</feature>